<keyword id="KW-0456">Lyase</keyword>
<keyword id="KW-0501">Molybdenum cofactor biosynthesis</keyword>
<sequence length="158" mass="17179">MSNVFTHINADGNAHMVDVTEKAVTEREARAEAFIEMASTTLEMIMSGSHHKGDVFATARIAGIQAAKKTSDLIPLCHPLMLTKVEVDLEAQPEHNRVRITSLCKLSGKTGVEMEALTAASVAALTIYDMCKAVQKDMVISQVRLLEKRGGKSGHFKV</sequence>
<proteinExistence type="inferred from homology"/>
<comment type="function">
    <text evidence="1">Catalyzes the conversion of (8S)-3',8-cyclo-7,8-dihydroguanosine 5'-triphosphate to cyclic pyranopterin monophosphate (cPMP).</text>
</comment>
<comment type="catalytic activity">
    <reaction evidence="1">
        <text>(8S)-3',8-cyclo-7,8-dihydroguanosine 5'-triphosphate = cyclic pyranopterin phosphate + diphosphate</text>
        <dbReference type="Rhea" id="RHEA:49580"/>
        <dbReference type="ChEBI" id="CHEBI:33019"/>
        <dbReference type="ChEBI" id="CHEBI:59648"/>
        <dbReference type="ChEBI" id="CHEBI:131766"/>
        <dbReference type="EC" id="4.6.1.17"/>
    </reaction>
</comment>
<comment type="pathway">
    <text evidence="1">Cofactor biosynthesis; molybdopterin biosynthesis.</text>
</comment>
<comment type="subunit">
    <text evidence="1">Homohexamer; trimer of dimers.</text>
</comment>
<comment type="similarity">
    <text evidence="1">Belongs to the MoaC family.</text>
</comment>
<protein>
    <recommendedName>
        <fullName evidence="1">Cyclic pyranopterin monophosphate synthase</fullName>
        <ecNumber evidence="1">4.6.1.17</ecNumber>
    </recommendedName>
    <alternativeName>
        <fullName evidence="1">Molybdenum cofactor biosynthesis protein C</fullName>
    </alternativeName>
</protein>
<feature type="chain" id="PRO_1000054142" description="Cyclic pyranopterin monophosphate synthase">
    <location>
        <begin position="1"/>
        <end position="158"/>
    </location>
</feature>
<feature type="active site" evidence="1">
    <location>
        <position position="129"/>
    </location>
</feature>
<feature type="binding site" evidence="1">
    <location>
        <begin position="76"/>
        <end position="78"/>
    </location>
    <ligand>
        <name>substrate</name>
    </ligand>
</feature>
<feature type="binding site" evidence="1">
    <location>
        <begin position="114"/>
        <end position="115"/>
    </location>
    <ligand>
        <name>substrate</name>
    </ligand>
</feature>
<evidence type="ECO:0000255" key="1">
    <source>
        <dbReference type="HAMAP-Rule" id="MF_01224"/>
    </source>
</evidence>
<organism>
    <name type="scientific">Shewanella sp. (strain W3-18-1)</name>
    <dbReference type="NCBI Taxonomy" id="351745"/>
    <lineage>
        <taxon>Bacteria</taxon>
        <taxon>Pseudomonadati</taxon>
        <taxon>Pseudomonadota</taxon>
        <taxon>Gammaproteobacteria</taxon>
        <taxon>Alteromonadales</taxon>
        <taxon>Shewanellaceae</taxon>
        <taxon>Shewanella</taxon>
    </lineage>
</organism>
<reference key="1">
    <citation type="submission" date="2006-12" db="EMBL/GenBank/DDBJ databases">
        <title>Complete sequence of Shewanella sp. W3-18-1.</title>
        <authorList>
            <consortium name="US DOE Joint Genome Institute"/>
            <person name="Copeland A."/>
            <person name="Lucas S."/>
            <person name="Lapidus A."/>
            <person name="Barry K."/>
            <person name="Detter J.C."/>
            <person name="Glavina del Rio T."/>
            <person name="Hammon N."/>
            <person name="Israni S."/>
            <person name="Dalin E."/>
            <person name="Tice H."/>
            <person name="Pitluck S."/>
            <person name="Chain P."/>
            <person name="Malfatti S."/>
            <person name="Shin M."/>
            <person name="Vergez L."/>
            <person name="Schmutz J."/>
            <person name="Larimer F."/>
            <person name="Land M."/>
            <person name="Hauser L."/>
            <person name="Kyrpides N."/>
            <person name="Lykidis A."/>
            <person name="Tiedje J."/>
            <person name="Richardson P."/>
        </authorList>
    </citation>
    <scope>NUCLEOTIDE SEQUENCE [LARGE SCALE GENOMIC DNA]</scope>
    <source>
        <strain>W3-18-1</strain>
    </source>
</reference>
<name>MOAC_SHESW</name>
<dbReference type="EC" id="4.6.1.17" evidence="1"/>
<dbReference type="EMBL" id="CP000503">
    <property type="protein sequence ID" value="ABM23095.1"/>
    <property type="molecule type" value="Genomic_DNA"/>
</dbReference>
<dbReference type="RefSeq" id="WP_006079755.1">
    <property type="nucleotide sequence ID" value="NC_008750.1"/>
</dbReference>
<dbReference type="SMR" id="A1REK0"/>
<dbReference type="GeneID" id="67441848"/>
<dbReference type="KEGG" id="shw:Sputw3181_0244"/>
<dbReference type="HOGENOM" id="CLU_074693_1_1_6"/>
<dbReference type="UniPathway" id="UPA00344"/>
<dbReference type="Proteomes" id="UP000002597">
    <property type="component" value="Chromosome"/>
</dbReference>
<dbReference type="GO" id="GO:0061799">
    <property type="term" value="F:cyclic pyranopterin monophosphate synthase activity"/>
    <property type="evidence" value="ECO:0007669"/>
    <property type="project" value="UniProtKB-UniRule"/>
</dbReference>
<dbReference type="GO" id="GO:0061798">
    <property type="term" value="F:GTP 3',8'-cyclase activity"/>
    <property type="evidence" value="ECO:0007669"/>
    <property type="project" value="TreeGrafter"/>
</dbReference>
<dbReference type="GO" id="GO:0006777">
    <property type="term" value="P:Mo-molybdopterin cofactor biosynthetic process"/>
    <property type="evidence" value="ECO:0007669"/>
    <property type="project" value="UniProtKB-UniRule"/>
</dbReference>
<dbReference type="CDD" id="cd01420">
    <property type="entry name" value="MoaC_PE"/>
    <property type="match status" value="1"/>
</dbReference>
<dbReference type="FunFam" id="3.30.70.640:FF:000001">
    <property type="entry name" value="Cyclic pyranopterin monophosphate synthase"/>
    <property type="match status" value="1"/>
</dbReference>
<dbReference type="Gene3D" id="3.30.70.640">
    <property type="entry name" value="Molybdopterin cofactor biosynthesis C (MoaC) domain"/>
    <property type="match status" value="1"/>
</dbReference>
<dbReference type="HAMAP" id="MF_01224_B">
    <property type="entry name" value="MoaC_B"/>
    <property type="match status" value="1"/>
</dbReference>
<dbReference type="InterPro" id="IPR023045">
    <property type="entry name" value="MoaC"/>
</dbReference>
<dbReference type="InterPro" id="IPR047594">
    <property type="entry name" value="MoaC_bact/euk"/>
</dbReference>
<dbReference type="InterPro" id="IPR036522">
    <property type="entry name" value="MoaC_sf"/>
</dbReference>
<dbReference type="InterPro" id="IPR050105">
    <property type="entry name" value="MoCo_biosynth_MoaA/MoaC"/>
</dbReference>
<dbReference type="InterPro" id="IPR002820">
    <property type="entry name" value="Mopterin_CF_biosynth-C_dom"/>
</dbReference>
<dbReference type="NCBIfam" id="TIGR00581">
    <property type="entry name" value="moaC"/>
    <property type="match status" value="1"/>
</dbReference>
<dbReference type="NCBIfam" id="NF006870">
    <property type="entry name" value="PRK09364.1"/>
    <property type="match status" value="1"/>
</dbReference>
<dbReference type="PANTHER" id="PTHR22960:SF0">
    <property type="entry name" value="MOLYBDENUM COFACTOR BIOSYNTHESIS PROTEIN 1"/>
    <property type="match status" value="1"/>
</dbReference>
<dbReference type="PANTHER" id="PTHR22960">
    <property type="entry name" value="MOLYBDOPTERIN COFACTOR SYNTHESIS PROTEIN A"/>
    <property type="match status" value="1"/>
</dbReference>
<dbReference type="Pfam" id="PF01967">
    <property type="entry name" value="MoaC"/>
    <property type="match status" value="1"/>
</dbReference>
<dbReference type="SUPFAM" id="SSF55040">
    <property type="entry name" value="Molybdenum cofactor biosynthesis protein C, MoaC"/>
    <property type="match status" value="1"/>
</dbReference>
<accession>A1REK0</accession>
<gene>
    <name evidence="1" type="primary">moaC</name>
    <name type="ordered locus">Sputw3181_0244</name>
</gene>